<evidence type="ECO:0000250" key="1">
    <source>
        <dbReference type="UniProtKB" id="Q9R112"/>
    </source>
</evidence>
<evidence type="ECO:0000255" key="2"/>
<evidence type="ECO:0000269" key="3">
    <source>
    </source>
</evidence>
<evidence type="ECO:0000269" key="4">
    <source>
    </source>
</evidence>
<evidence type="ECO:0000269" key="5">
    <source>
    </source>
</evidence>
<evidence type="ECO:0000269" key="6">
    <source>
    </source>
</evidence>
<evidence type="ECO:0000269" key="7">
    <source>
    </source>
</evidence>
<evidence type="ECO:0000269" key="8">
    <source>
    </source>
</evidence>
<evidence type="ECO:0000303" key="9">
    <source>
    </source>
</evidence>
<evidence type="ECO:0000305" key="10"/>
<evidence type="ECO:0000312" key="11">
    <source>
        <dbReference type="HGNC" id="HGNC:20390"/>
    </source>
</evidence>
<evidence type="ECO:0007744" key="12">
    <source>
        <dbReference type="PDB" id="6MO6"/>
    </source>
</evidence>
<evidence type="ECO:0007744" key="13">
    <source>
        <dbReference type="PDB" id="6MP5"/>
    </source>
</evidence>
<evidence type="ECO:0007829" key="14">
    <source>
        <dbReference type="PDB" id="6OI6"/>
    </source>
</evidence>
<evidence type="ECO:0007829" key="15">
    <source>
        <dbReference type="PDB" id="6OIB"/>
    </source>
</evidence>
<evidence type="ECO:0007829" key="16">
    <source>
        <dbReference type="PDB" id="6WH6"/>
    </source>
</evidence>
<evidence type="ECO:0007829" key="17">
    <source>
        <dbReference type="PDB" id="8DHK"/>
    </source>
</evidence>
<dbReference type="EC" id="1.8.5.8" evidence="4"/>
<dbReference type="EMBL" id="AF042284">
    <property type="protein sequence ID" value="AAD41160.1"/>
    <property type="molecule type" value="mRNA"/>
</dbReference>
<dbReference type="EMBL" id="AF151802">
    <property type="protein sequence ID" value="AAD34039.1"/>
    <property type="molecule type" value="mRNA"/>
</dbReference>
<dbReference type="EMBL" id="BC016836">
    <property type="protein sequence ID" value="AAH16836.1"/>
    <property type="molecule type" value="mRNA"/>
</dbReference>
<dbReference type="CCDS" id="CCDS10127.1"/>
<dbReference type="RefSeq" id="NP_001258142.1">
    <property type="nucleotide sequence ID" value="NM_001271213.2"/>
</dbReference>
<dbReference type="RefSeq" id="NP_067022.1">
    <property type="nucleotide sequence ID" value="NM_021199.4"/>
</dbReference>
<dbReference type="PDB" id="6MO6">
    <property type="method" value="X-ray"/>
    <property type="resolution" value="2.59 A"/>
    <property type="chains" value="A/B/C/D=42-450"/>
</dbReference>
<dbReference type="PDB" id="6MP5">
    <property type="method" value="X-ray"/>
    <property type="resolution" value="2.99 A"/>
    <property type="chains" value="A/B/C/D=42-450"/>
</dbReference>
<dbReference type="PDB" id="6OI5">
    <property type="method" value="X-ray"/>
    <property type="resolution" value="2.81 A"/>
    <property type="chains" value="A/B=42-450"/>
</dbReference>
<dbReference type="PDB" id="6OI6">
    <property type="method" value="X-ray"/>
    <property type="resolution" value="2.56 A"/>
    <property type="chains" value="A/B=42-450"/>
</dbReference>
<dbReference type="PDB" id="6OIB">
    <property type="method" value="X-ray"/>
    <property type="resolution" value="2.03 A"/>
    <property type="chains" value="A/B=42-450"/>
</dbReference>
<dbReference type="PDB" id="6OIC">
    <property type="method" value="X-ray"/>
    <property type="resolution" value="2.21 A"/>
    <property type="chains" value="A/B=42-450"/>
</dbReference>
<dbReference type="PDB" id="6WH6">
    <property type="method" value="X-ray"/>
    <property type="resolution" value="2.25 A"/>
    <property type="chains" value="A/B=42-450"/>
</dbReference>
<dbReference type="PDB" id="8DHK">
    <property type="method" value="X-ray"/>
    <property type="resolution" value="2.30 A"/>
    <property type="chains" value="A/B=42-450"/>
</dbReference>
<dbReference type="PDBsum" id="6MO6"/>
<dbReference type="PDBsum" id="6MP5"/>
<dbReference type="PDBsum" id="6OI5"/>
<dbReference type="PDBsum" id="6OI6"/>
<dbReference type="PDBsum" id="6OIB"/>
<dbReference type="PDBsum" id="6OIC"/>
<dbReference type="PDBsum" id="6WH6"/>
<dbReference type="PDBsum" id="8DHK"/>
<dbReference type="SMR" id="Q9Y6N5"/>
<dbReference type="BioGRID" id="121806">
    <property type="interactions" value="122"/>
</dbReference>
<dbReference type="FunCoup" id="Q9Y6N5">
    <property type="interactions" value="602"/>
</dbReference>
<dbReference type="IntAct" id="Q9Y6N5">
    <property type="interactions" value="92"/>
</dbReference>
<dbReference type="MINT" id="Q9Y6N5"/>
<dbReference type="STRING" id="9606.ENSP00000456019"/>
<dbReference type="BindingDB" id="Q9Y6N5"/>
<dbReference type="ChEMBL" id="CHEMBL4523512"/>
<dbReference type="DrugCentral" id="Q9Y6N5"/>
<dbReference type="GlyGen" id="Q9Y6N5">
    <property type="glycosylation" value="2 sites, 1 N-linked glycan (1 site), 1 O-linked glycan (1 site)"/>
</dbReference>
<dbReference type="iPTMnet" id="Q9Y6N5"/>
<dbReference type="PhosphoSitePlus" id="Q9Y6N5"/>
<dbReference type="SwissPalm" id="Q9Y6N5"/>
<dbReference type="BioMuta" id="SQOR"/>
<dbReference type="DMDM" id="27151704"/>
<dbReference type="jPOST" id="Q9Y6N5"/>
<dbReference type="MassIVE" id="Q9Y6N5"/>
<dbReference type="PaxDb" id="9606-ENSP00000260324"/>
<dbReference type="PeptideAtlas" id="Q9Y6N5"/>
<dbReference type="PRIDE" id="Q9Y6N5"/>
<dbReference type="ProteomicsDB" id="86742"/>
<dbReference type="Pumba" id="Q9Y6N5"/>
<dbReference type="Antibodypedia" id="2131">
    <property type="antibodies" value="133 antibodies from 25 providers"/>
</dbReference>
<dbReference type="DNASU" id="58472"/>
<dbReference type="Ensembl" id="ENST00000260324.12">
    <property type="protein sequence ID" value="ENSP00000260324.7"/>
    <property type="gene ID" value="ENSG00000137767.14"/>
</dbReference>
<dbReference type="Ensembl" id="ENST00000568606.5">
    <property type="protein sequence ID" value="ENSP00000456019.1"/>
    <property type="gene ID" value="ENSG00000137767.14"/>
</dbReference>
<dbReference type="GeneID" id="58472"/>
<dbReference type="KEGG" id="hsa:58472"/>
<dbReference type="MANE-Select" id="ENST00000260324.12">
    <property type="protein sequence ID" value="ENSP00000260324.7"/>
    <property type="RefSeq nucleotide sequence ID" value="NM_021199.4"/>
    <property type="RefSeq protein sequence ID" value="NP_067022.1"/>
</dbReference>
<dbReference type="UCSC" id="uc001zvv.4">
    <property type="organism name" value="human"/>
</dbReference>
<dbReference type="AGR" id="HGNC:20390"/>
<dbReference type="CTD" id="58472"/>
<dbReference type="DisGeNET" id="58472"/>
<dbReference type="GeneCards" id="SQOR"/>
<dbReference type="HGNC" id="HGNC:20390">
    <property type="gene designation" value="SQOR"/>
</dbReference>
<dbReference type="HPA" id="ENSG00000137767">
    <property type="expression patterns" value="Tissue enhanced (intestine)"/>
</dbReference>
<dbReference type="MalaCards" id="SQOR"/>
<dbReference type="MIM" id="617658">
    <property type="type" value="gene"/>
</dbReference>
<dbReference type="MIM" id="619221">
    <property type="type" value="phenotype"/>
</dbReference>
<dbReference type="neXtProt" id="NX_Q9Y6N5"/>
<dbReference type="OpenTargets" id="ENSG00000137767"/>
<dbReference type="PharmGKB" id="PA134894920"/>
<dbReference type="VEuPathDB" id="HostDB:ENSG00000137767"/>
<dbReference type="eggNOG" id="KOG3851">
    <property type="taxonomic scope" value="Eukaryota"/>
</dbReference>
<dbReference type="GeneTree" id="ENSGT00390000019406"/>
<dbReference type="HOGENOM" id="CLU_030742_2_1_1"/>
<dbReference type="InParanoid" id="Q9Y6N5"/>
<dbReference type="OMA" id="YRCAPAP"/>
<dbReference type="OrthoDB" id="5376590at2759"/>
<dbReference type="PAN-GO" id="Q9Y6N5">
    <property type="GO annotations" value="4 GO annotations based on evolutionary models"/>
</dbReference>
<dbReference type="PhylomeDB" id="Q9Y6N5"/>
<dbReference type="TreeFam" id="TF314384"/>
<dbReference type="BioCyc" id="MetaCyc:HS06393-MONOMER"/>
<dbReference type="BRENDA" id="1.8.5.4">
    <property type="organism ID" value="2681"/>
</dbReference>
<dbReference type="BRENDA" id="1.8.5.8">
    <property type="organism ID" value="2681"/>
</dbReference>
<dbReference type="PathwayCommons" id="Q9Y6N5"/>
<dbReference type="Reactome" id="R-HSA-1614517">
    <property type="pathway name" value="Sulfide oxidation to sulfate"/>
</dbReference>
<dbReference type="SignaLink" id="Q9Y6N5"/>
<dbReference type="BioGRID-ORCS" id="58472">
    <property type="hits" value="14 hits in 1151 CRISPR screens"/>
</dbReference>
<dbReference type="ChiTaRS" id="SQRDL">
    <property type="organism name" value="human"/>
</dbReference>
<dbReference type="GenomeRNAi" id="58472"/>
<dbReference type="Pharos" id="Q9Y6N5">
    <property type="development level" value="Tchem"/>
</dbReference>
<dbReference type="PRO" id="PR:Q9Y6N5"/>
<dbReference type="Proteomes" id="UP000005640">
    <property type="component" value="Chromosome 15"/>
</dbReference>
<dbReference type="RNAct" id="Q9Y6N5">
    <property type="molecule type" value="protein"/>
</dbReference>
<dbReference type="Bgee" id="ENSG00000137767">
    <property type="expression patterns" value="Expressed in colonic mucosa and 191 other cell types or tissues"/>
</dbReference>
<dbReference type="ExpressionAtlas" id="Q9Y6N5">
    <property type="expression patterns" value="baseline and differential"/>
</dbReference>
<dbReference type="GO" id="GO:0005743">
    <property type="term" value="C:mitochondrial inner membrane"/>
    <property type="evidence" value="ECO:0000304"/>
    <property type="project" value="Reactome"/>
</dbReference>
<dbReference type="GO" id="GO:0005739">
    <property type="term" value="C:mitochondrion"/>
    <property type="evidence" value="ECO:0006056"/>
    <property type="project" value="FlyBase"/>
</dbReference>
<dbReference type="GO" id="GO:0071949">
    <property type="term" value="F:FAD binding"/>
    <property type="evidence" value="ECO:0000318"/>
    <property type="project" value="GO_Central"/>
</dbReference>
<dbReference type="GO" id="GO:0106436">
    <property type="term" value="F:glutathione-dependent sulfide quinone oxidoreductase activity"/>
    <property type="evidence" value="ECO:0000314"/>
    <property type="project" value="FlyBase"/>
</dbReference>
<dbReference type="GO" id="GO:0048038">
    <property type="term" value="F:quinone binding"/>
    <property type="evidence" value="ECO:0007669"/>
    <property type="project" value="UniProtKB-KW"/>
</dbReference>
<dbReference type="GO" id="GO:0070224">
    <property type="term" value="F:sulfide:quinone oxidoreductase activity"/>
    <property type="evidence" value="ECO:0000314"/>
    <property type="project" value="UniProtKB"/>
</dbReference>
<dbReference type="GO" id="GO:0070221">
    <property type="term" value="P:sulfide oxidation, using sulfide:quinone oxidoreductase"/>
    <property type="evidence" value="ECO:0000314"/>
    <property type="project" value="UniProtKB"/>
</dbReference>
<dbReference type="FunFam" id="3.50.50.60:FF:000034">
    <property type="entry name" value="sulfide:quinone oxidoreductase, mitochondrial"/>
    <property type="match status" value="1"/>
</dbReference>
<dbReference type="Gene3D" id="3.50.50.60">
    <property type="entry name" value="FAD/NAD(P)-binding domain"/>
    <property type="match status" value="2"/>
</dbReference>
<dbReference type="InterPro" id="IPR036188">
    <property type="entry name" value="FAD/NAD-bd_sf"/>
</dbReference>
<dbReference type="InterPro" id="IPR023753">
    <property type="entry name" value="FAD/NAD-binding_dom"/>
</dbReference>
<dbReference type="InterPro" id="IPR015904">
    <property type="entry name" value="Sulphide_quinone_reductase"/>
</dbReference>
<dbReference type="PANTHER" id="PTHR10632">
    <property type="entry name" value="SULFIDE:QUINONE OXIDOREDUCTASE"/>
    <property type="match status" value="1"/>
</dbReference>
<dbReference type="PANTHER" id="PTHR10632:SF2">
    <property type="entry name" value="SULFIDE:QUINONE OXIDOREDUCTASE, MITOCHONDRIAL"/>
    <property type="match status" value="1"/>
</dbReference>
<dbReference type="Pfam" id="PF07992">
    <property type="entry name" value="Pyr_redox_2"/>
    <property type="match status" value="1"/>
</dbReference>
<dbReference type="SUPFAM" id="SSF51905">
    <property type="entry name" value="FAD/NAD(P)-binding domain"/>
    <property type="match status" value="1"/>
</dbReference>
<sequence length="450" mass="49961">MVPLVAVVSGPRAQLFACLLRLGTQQVGPLQLHTGASHAARNHYEVLVLGGGSGGITMAARMKRKVGAENVAIVEPSERHFYQPIWTLVGAGAKQLSSSGRPTASVIPSGVEWIKARVTELNPDKNCIHTDDDEKISYRYLIIALGIQLDYEKIKGLPEGFAHPKIGSNYSVKTVEKTWKALQDFKEGNAIFTFPNTPVKCAGAPQKIMYLSEAYFRKTGKRSKANIIFNTSLGAIFGVKKYADALQEIIQERNLTVNYKKNLIEVRADKQEAVFENLDKPGETQVISYEMLHVTPPMSPPDVLKTSPVADAAGWVDVDKETLQHRRYPNVFGIGDCTNLPTSKTAAAVAAQSGILDRTISVIMKNQTPTKKYDGYTSCPLVTGYNRVILAEFDYKAEPLETFPFDQSKERLSMYLMKADLMPFLYWNMMLRGYWGGPAFLRKLFHLGMS</sequence>
<gene>
    <name evidence="11" type="primary">SQOR</name>
    <name evidence="11" type="synonym">SQRDL</name>
    <name type="ORF">CGI-44</name>
</gene>
<keyword id="KW-0002">3D-structure</keyword>
<keyword id="KW-0007">Acetylation</keyword>
<keyword id="KW-0225">Disease variant</keyword>
<keyword id="KW-1015">Disulfide bond</keyword>
<keyword id="KW-0274">FAD</keyword>
<keyword id="KW-0285">Flavoprotein</keyword>
<keyword id="KW-0496">Mitochondrion</keyword>
<keyword id="KW-0560">Oxidoreductase</keyword>
<keyword id="KW-0597">Phosphoprotein</keyword>
<keyword id="KW-1267">Proteomics identification</keyword>
<keyword id="KW-0874">Quinone</keyword>
<keyword id="KW-1185">Reference proteome</keyword>
<keyword id="KW-0809">Transit peptide</keyword>
<feature type="transit peptide" description="Mitochondrion" evidence="2">
    <location>
        <begin position="1"/>
        <end status="unknown"/>
    </location>
</feature>
<feature type="chain" id="PRO_0000022408" description="Sulfide:quinone oxidoreductase, mitochondrial">
    <location>
        <begin status="unknown"/>
        <end position="450"/>
    </location>
</feature>
<feature type="active site" description="Cysteine persulfide intermediate" evidence="7 9">
    <location>
        <position position="201"/>
    </location>
</feature>
<feature type="active site" description="Cysteine persulfide intermediate" evidence="7 9">
    <location>
        <position position="379"/>
    </location>
</feature>
<feature type="binding site" evidence="7">
    <location>
        <begin position="53"/>
        <end position="54"/>
    </location>
    <ligand>
        <name>FAD</name>
        <dbReference type="ChEBI" id="CHEBI:57692"/>
    </ligand>
</feature>
<feature type="binding site" evidence="7">
    <location>
        <position position="75"/>
    </location>
    <ligand>
        <name>FAD</name>
        <dbReference type="ChEBI" id="CHEBI:57692"/>
    </ligand>
</feature>
<feature type="binding site" evidence="7">
    <location>
        <position position="83"/>
    </location>
    <ligand>
        <name>FAD</name>
        <dbReference type="ChEBI" id="CHEBI:57692"/>
    </ligand>
</feature>
<feature type="binding site" evidence="7">
    <location>
        <position position="118"/>
    </location>
    <ligand>
        <name>FAD</name>
        <dbReference type="ChEBI" id="CHEBI:57692"/>
    </ligand>
</feature>
<feature type="binding site" evidence="7">
    <location>
        <position position="336"/>
    </location>
    <ligand>
        <name>FAD</name>
        <dbReference type="ChEBI" id="CHEBI:57692"/>
    </ligand>
</feature>
<feature type="binding site" evidence="7">
    <location>
        <begin position="344"/>
        <end position="347"/>
    </location>
    <ligand>
        <name>FAD</name>
        <dbReference type="ChEBI" id="CHEBI:57692"/>
    </ligand>
</feature>
<feature type="modified residue" description="N6-acetyllysine" evidence="1">
    <location>
        <position position="173"/>
    </location>
</feature>
<feature type="modified residue" description="Phosphoserine" evidence="1">
    <location>
        <position position="343"/>
    </location>
</feature>
<feature type="disulfide bond" evidence="7">
    <location>
        <begin position="201"/>
        <end position="379"/>
    </location>
</feature>
<feature type="sequence variant" id="VAR_085241" description="In SQORD; severely decreased sulfide:quinone oxidoreductase activity; severely reduced protein levels in patient cells." evidence="8">
    <original>E</original>
    <variation>K</variation>
    <location>
        <position position="213"/>
    </location>
</feature>
<feature type="sequence variant" id="VAR_014959" description="In dbSNP:rs1044032." evidence="3">
    <original>I</original>
    <variation>T</variation>
    <location>
        <position position="264"/>
    </location>
</feature>
<feature type="strand" evidence="15">
    <location>
        <begin position="42"/>
        <end position="49"/>
    </location>
</feature>
<feature type="helix" evidence="15">
    <location>
        <begin position="53"/>
        <end position="66"/>
    </location>
</feature>
<feature type="helix" evidence="15">
    <location>
        <begin position="68"/>
        <end position="70"/>
    </location>
</feature>
<feature type="strand" evidence="15">
    <location>
        <begin position="71"/>
        <end position="74"/>
    </location>
</feature>
<feature type="strand" evidence="15">
    <location>
        <begin position="78"/>
        <end position="81"/>
    </location>
</feature>
<feature type="helix" evidence="15">
    <location>
        <begin position="83"/>
        <end position="85"/>
    </location>
</feature>
<feature type="helix" evidence="15">
    <location>
        <begin position="86"/>
        <end position="89"/>
    </location>
</feature>
<feature type="turn" evidence="15">
    <location>
        <begin position="90"/>
        <end position="92"/>
    </location>
</feature>
<feature type="helix" evidence="15">
    <location>
        <begin position="97"/>
        <end position="99"/>
    </location>
</feature>
<feature type="strand" evidence="15">
    <location>
        <begin position="100"/>
        <end position="102"/>
    </location>
</feature>
<feature type="helix" evidence="15">
    <location>
        <begin position="103"/>
        <end position="106"/>
    </location>
</feature>
<feature type="strand" evidence="15">
    <location>
        <begin position="112"/>
        <end position="114"/>
    </location>
</feature>
<feature type="strand" evidence="15">
    <location>
        <begin position="118"/>
        <end position="122"/>
    </location>
</feature>
<feature type="helix" evidence="15">
    <location>
        <begin position="123"/>
        <end position="125"/>
    </location>
</feature>
<feature type="strand" evidence="15">
    <location>
        <begin position="127"/>
        <end position="130"/>
    </location>
</feature>
<feature type="turn" evidence="16">
    <location>
        <begin position="131"/>
        <end position="133"/>
    </location>
</feature>
<feature type="strand" evidence="15">
    <location>
        <begin position="135"/>
        <end position="143"/>
    </location>
</feature>
<feature type="helix" evidence="15">
    <location>
        <begin position="151"/>
        <end position="153"/>
    </location>
</feature>
<feature type="turn" evidence="15">
    <location>
        <begin position="156"/>
        <end position="158"/>
    </location>
</feature>
<feature type="helix" evidence="15">
    <location>
        <begin position="159"/>
        <end position="162"/>
    </location>
</feature>
<feature type="strand" evidence="17">
    <location>
        <begin position="163"/>
        <end position="167"/>
    </location>
</feature>
<feature type="turn" evidence="15">
    <location>
        <begin position="172"/>
        <end position="174"/>
    </location>
</feature>
<feature type="helix" evidence="15">
    <location>
        <begin position="175"/>
        <end position="184"/>
    </location>
</feature>
<feature type="strand" evidence="15">
    <location>
        <begin position="187"/>
        <end position="194"/>
    </location>
</feature>
<feature type="helix" evidence="15">
    <location>
        <begin position="204"/>
        <end position="218"/>
    </location>
</feature>
<feature type="helix" evidence="15">
    <location>
        <begin position="222"/>
        <end position="224"/>
    </location>
</feature>
<feature type="strand" evidence="15">
    <location>
        <begin position="225"/>
        <end position="236"/>
    </location>
</feature>
<feature type="helix" evidence="15">
    <location>
        <begin position="240"/>
        <end position="252"/>
    </location>
</feature>
<feature type="strand" evidence="15">
    <location>
        <begin position="256"/>
        <end position="267"/>
    </location>
</feature>
<feature type="turn" evidence="15">
    <location>
        <begin position="268"/>
        <end position="271"/>
    </location>
</feature>
<feature type="strand" evidence="15">
    <location>
        <begin position="272"/>
        <end position="277"/>
    </location>
</feature>
<feature type="strand" evidence="15">
    <location>
        <begin position="284"/>
        <end position="288"/>
    </location>
</feature>
<feature type="strand" evidence="15">
    <location>
        <begin position="290"/>
        <end position="293"/>
    </location>
</feature>
<feature type="strand" evidence="15">
    <location>
        <begin position="298"/>
        <end position="300"/>
    </location>
</feature>
<feature type="helix" evidence="15">
    <location>
        <begin position="302"/>
        <end position="305"/>
    </location>
</feature>
<feature type="strand" evidence="15">
    <location>
        <begin position="314"/>
        <end position="316"/>
    </location>
</feature>
<feature type="turn" evidence="15">
    <location>
        <begin position="320"/>
        <end position="322"/>
    </location>
</feature>
<feature type="strand" evidence="15">
    <location>
        <begin position="324"/>
        <end position="327"/>
    </location>
</feature>
<feature type="strand" evidence="15">
    <location>
        <begin position="331"/>
        <end position="333"/>
    </location>
</feature>
<feature type="helix" evidence="15">
    <location>
        <begin position="335"/>
        <end position="337"/>
    </location>
</feature>
<feature type="helix" evidence="15">
    <location>
        <begin position="346"/>
        <end position="364"/>
    </location>
</feature>
<feature type="strand" evidence="15">
    <location>
        <begin position="377"/>
        <end position="384"/>
    </location>
</feature>
<feature type="strand" evidence="15">
    <location>
        <begin position="387"/>
        <end position="393"/>
    </location>
</feature>
<feature type="strand" evidence="14">
    <location>
        <begin position="397"/>
        <end position="399"/>
    </location>
</feature>
<feature type="strand" evidence="15">
    <location>
        <begin position="402"/>
        <end position="405"/>
    </location>
</feature>
<feature type="helix" evidence="15">
    <location>
        <begin position="412"/>
        <end position="419"/>
    </location>
</feature>
<feature type="helix" evidence="15">
    <location>
        <begin position="421"/>
        <end position="428"/>
    </location>
</feature>
<feature type="turn" evidence="15">
    <location>
        <begin position="429"/>
        <end position="433"/>
    </location>
</feature>
<feature type="helix" evidence="15">
    <location>
        <begin position="439"/>
        <end position="445"/>
    </location>
</feature>
<comment type="function">
    <text evidence="4 5 6 8">Catalyzes the oxidation of hydrogen sulfide with the help of a quinone, such as ubiquinone-10, giving rise to thiosulfate and ultimately to sulfane (molecular sulfur) atoms. Requires an additional electron acceptor; can use sulfite, sulfide or cyanide (in vitro) (PubMed:22852582). It is believed the in vivo electron acceptor is glutathione (PubMed:25225291, PubMed:29715001).</text>
</comment>
<comment type="catalytic activity">
    <reaction evidence="4">
        <text>ubiquinone-10 + hydrogen sulfide + sulfite + 2 H(+) = ubiquinol-10 + thiosulfate</text>
        <dbReference type="Rhea" id="RHEA:38359"/>
        <dbReference type="ChEBI" id="CHEBI:15378"/>
        <dbReference type="ChEBI" id="CHEBI:17359"/>
        <dbReference type="ChEBI" id="CHEBI:29919"/>
        <dbReference type="ChEBI" id="CHEBI:33542"/>
        <dbReference type="ChEBI" id="CHEBI:46245"/>
        <dbReference type="ChEBI" id="CHEBI:64183"/>
    </reaction>
    <physiologicalReaction direction="left-to-right" evidence="4">
        <dbReference type="Rhea" id="RHEA:38360"/>
    </physiologicalReaction>
</comment>
<comment type="catalytic activity">
    <reaction evidence="5 6 8">
        <text>a quinone + hydrogen sulfide + glutathione + H(+) = S-sulfanylglutathione + a quinol</text>
        <dbReference type="Rhea" id="RHEA:55156"/>
        <dbReference type="ChEBI" id="CHEBI:15378"/>
        <dbReference type="ChEBI" id="CHEBI:24646"/>
        <dbReference type="ChEBI" id="CHEBI:29919"/>
        <dbReference type="ChEBI" id="CHEBI:57925"/>
        <dbReference type="ChEBI" id="CHEBI:58905"/>
        <dbReference type="ChEBI" id="CHEBI:132124"/>
        <dbReference type="EC" id="1.8.5.8"/>
    </reaction>
    <physiologicalReaction direction="left-to-right" evidence="5 6">
        <dbReference type="Rhea" id="RHEA:55157"/>
    </physiologicalReaction>
</comment>
<comment type="catalytic activity">
    <reaction evidence="6">
        <text>ubiquinone-10 + hydrogen sulfide + glutathione + H(+) = S-sulfanylglutathione + ubiquinol-10</text>
        <dbReference type="Rhea" id="RHEA:62608"/>
        <dbReference type="ChEBI" id="CHEBI:15378"/>
        <dbReference type="ChEBI" id="CHEBI:29919"/>
        <dbReference type="ChEBI" id="CHEBI:46245"/>
        <dbReference type="ChEBI" id="CHEBI:57925"/>
        <dbReference type="ChEBI" id="CHEBI:58905"/>
        <dbReference type="ChEBI" id="CHEBI:64183"/>
    </reaction>
    <physiologicalReaction direction="left-to-right" evidence="6">
        <dbReference type="Rhea" id="RHEA:62609"/>
    </physiologicalReaction>
</comment>
<comment type="cofactor">
    <cofactor evidence="4 7">
        <name>FAD</name>
        <dbReference type="ChEBI" id="CHEBI:57692"/>
    </cofactor>
    <text evidence="4 7">Binds 1 FAD per subunit.</text>
</comment>
<comment type="biophysicochemical properties">
    <kinetics>
        <KM evidence="4">13 uM for sulfide (with sulfite as electron acceptor)</KM>
        <KM evidence="5">10 uM for sulfide (with glutathione as electron acceptor)</KM>
        <KM evidence="5">5 uM for sulfide (with cysteine as electron acceptor)</KM>
        <KM evidence="5">0.22 mM for sulfite</KM>
        <KM evidence="5">22 mM for glutathione</KM>
        <KM evidence="5">23 uM for cysteine</KM>
        <Vmax evidence="5">476.0 umol/min/mg enzyme with sulfite as electron acceptor</Vmax>
        <Vmax evidence="5">144.0 umol/min/mg enzyme with glutathione as electron acceptor</Vmax>
        <Vmax evidence="5">120.0 umol/min/mg enzyme with cysteine as electron acceptor</Vmax>
    </kinetics>
</comment>
<comment type="interaction">
    <interactant intactId="EBI-1170418">
        <id>Q9Y6N5</id>
    </interactant>
    <interactant intactId="EBI-10311131">
        <id>Q9NP86</id>
        <label>CABP5</label>
    </interactant>
    <organismsDiffer>false</organismsDiffer>
    <experiments>2</experiments>
</comment>
<comment type="subcellular location">
    <subcellularLocation>
        <location evidence="10">Mitochondrion</location>
    </subcellularLocation>
</comment>
<comment type="disease" evidence="8">
    <disease id="DI-06038">
        <name>Sulfide:quinone oxidoreductase deficiency</name>
        <acronym>SQORD</acronym>
        <description>An autosomal recessive disorder of hydrogen sulfide metabolism characterized by a variable phenotype. Some patients present with encephalopathy, clinical manifestations of Leigh syndrome, and may have a fatal disease course. Others are asymptomatic. Additional features may include lactic acidosis and decreased mitochondrial respiratory chain complex IV activity in tissues.</description>
        <dbReference type="MIM" id="619221"/>
    </disease>
    <text>The disease is caused by variants affecting the gene represented in this entry.</text>
</comment>
<comment type="similarity">
    <text evidence="10">Belongs to the SQRD family.</text>
</comment>
<organism>
    <name type="scientific">Homo sapiens</name>
    <name type="common">Human</name>
    <dbReference type="NCBI Taxonomy" id="9606"/>
    <lineage>
        <taxon>Eukaryota</taxon>
        <taxon>Metazoa</taxon>
        <taxon>Chordata</taxon>
        <taxon>Craniata</taxon>
        <taxon>Vertebrata</taxon>
        <taxon>Euteleostomi</taxon>
        <taxon>Mammalia</taxon>
        <taxon>Eutheria</taxon>
        <taxon>Euarchontoglires</taxon>
        <taxon>Primates</taxon>
        <taxon>Haplorrhini</taxon>
        <taxon>Catarrhini</taxon>
        <taxon>Hominidae</taxon>
        <taxon>Homo</taxon>
    </lineage>
</organism>
<accession>Q9Y6N5</accession>
<accession>Q9UQM8</accession>
<proteinExistence type="evidence at protein level"/>
<reference key="1">
    <citation type="journal article" date="1999" name="J. Biol. Chem.">
        <title>A fission yeast gene for mitochondrial sulfide oxidation.</title>
        <authorList>
            <person name="Vande Weghe J.G."/>
            <person name="Ow D.W."/>
        </authorList>
    </citation>
    <scope>NUCLEOTIDE SEQUENCE [MRNA]</scope>
    <source>
        <tissue>Brain</tissue>
    </source>
</reference>
<reference key="2">
    <citation type="journal article" date="2000" name="Genome Res.">
        <title>Identification of novel human genes evolutionarily conserved in Caenorhabditis elegans by comparative proteomics.</title>
        <authorList>
            <person name="Lai C.-H."/>
            <person name="Chou C.-Y."/>
            <person name="Ch'ang L.-Y."/>
            <person name="Liu C.-S."/>
            <person name="Lin W.-C."/>
        </authorList>
    </citation>
    <scope>NUCLEOTIDE SEQUENCE [LARGE SCALE MRNA]</scope>
    <scope>VARIANT THR-264</scope>
</reference>
<reference key="3">
    <citation type="journal article" date="2004" name="Genome Res.">
        <title>The status, quality, and expansion of the NIH full-length cDNA project: the Mammalian Gene Collection (MGC).</title>
        <authorList>
            <consortium name="The MGC Project Team"/>
        </authorList>
    </citation>
    <scope>NUCLEOTIDE SEQUENCE [LARGE SCALE MRNA]</scope>
    <source>
        <tissue>Lung</tissue>
    </source>
</reference>
<reference key="4">
    <citation type="journal article" date="2011" name="BMC Syst. Biol.">
        <title>Initial characterization of the human central proteome.</title>
        <authorList>
            <person name="Burkard T.R."/>
            <person name="Planyavsky M."/>
            <person name="Kaupe I."/>
            <person name="Breitwieser F.P."/>
            <person name="Buerckstuemmer T."/>
            <person name="Bennett K.L."/>
            <person name="Superti-Furga G."/>
            <person name="Colinge J."/>
        </authorList>
    </citation>
    <scope>IDENTIFICATION BY MASS SPECTROMETRY [LARGE SCALE ANALYSIS]</scope>
</reference>
<reference key="5">
    <citation type="journal article" date="2012" name="Biochemistry">
        <title>Human sulfide:quinone oxidoreductase catalyzes the first step in hydrogen sulfide metabolism and produces a sulfane sulfur metabolite.</title>
        <authorList>
            <person name="Jackson M.R."/>
            <person name="Melideo S.L."/>
            <person name="Jorns M.S."/>
        </authorList>
    </citation>
    <scope>FUNCTION</scope>
    <scope>CATALYTIC ACTIVITY</scope>
    <scope>COFACTOR</scope>
    <scope>ACTIVE SITE</scope>
    <scope>BIOPHYSICOCHEMICAL PROPERTIES</scope>
</reference>
<reference key="6">
    <citation type="journal article" date="2014" name="J. Biol. Chem.">
        <title>Organization of the human mitochondrial hydrogen sulfide oxidation pathway.</title>
        <authorList>
            <person name="Libiad M."/>
            <person name="Yadav P.K."/>
            <person name="Vitvitsky V."/>
            <person name="Martinov M."/>
            <person name="Banerjee R."/>
        </authorList>
    </citation>
    <scope>FUNCTION</scope>
    <scope>CATALYTIC ACTIVITY</scope>
    <scope>BIOPHYSICOCHEMICAL PROPERTIES</scope>
    <scope>ENZYME KINETICS</scope>
</reference>
<reference key="7">
    <citation type="journal article" date="2014" name="J. Proteomics">
        <title>An enzyme assisted RP-RPLC approach for in-depth analysis of human liver phosphoproteome.</title>
        <authorList>
            <person name="Bian Y."/>
            <person name="Song C."/>
            <person name="Cheng K."/>
            <person name="Dong M."/>
            <person name="Wang F."/>
            <person name="Huang J."/>
            <person name="Sun D."/>
            <person name="Wang L."/>
            <person name="Ye M."/>
            <person name="Zou H."/>
        </authorList>
    </citation>
    <scope>IDENTIFICATION BY MASS SPECTROMETRY [LARGE SCALE ANALYSIS]</scope>
    <source>
        <tissue>Liver</tissue>
    </source>
</reference>
<reference key="8">
    <citation type="journal article" date="2015" name="Proteomics">
        <title>N-terminome analysis of the human mitochondrial proteome.</title>
        <authorList>
            <person name="Vaca Jacome A.S."/>
            <person name="Rabilloud T."/>
            <person name="Schaeffer-Reiss C."/>
            <person name="Rompais M."/>
            <person name="Ayoub D."/>
            <person name="Lane L."/>
            <person name="Bairoch A."/>
            <person name="Van Dorsselaer A."/>
            <person name="Carapito C."/>
        </authorList>
    </citation>
    <scope>IDENTIFICATION BY MASS SPECTROMETRY [LARGE SCALE ANALYSIS]</scope>
</reference>
<reference key="9">
    <citation type="journal article" date="2018" name="ACS Chem. Biol.">
        <title>Modulation of catalytic promiscuity during hydrogen sulfide oxidation.</title>
        <authorList>
            <person name="Landry A.P."/>
            <person name="Ballou D.P."/>
            <person name="Banerjee R."/>
        </authorList>
    </citation>
    <scope>FUNCTION</scope>
    <scope>CATALYTIC ACTIVITY</scope>
    <scope>ENZYME KINETICS</scope>
</reference>
<reference key="10">
    <citation type="journal article" date="2020" name="J. Inherit. Metab. Dis.">
        <title>Pathogenic variants in SQOR encoding sulfide:quinone oxidoreductase are a potentially treatable cause of Leigh disease.</title>
        <authorList>
            <person name="Friederich M.W."/>
            <person name="Elias A.F."/>
            <person name="Kuster A."/>
            <person name="Laugwitz L."/>
            <person name="Larson A.A."/>
            <person name="Landry A.P."/>
            <person name="Ellwood-Digel L."/>
            <person name="Mirsky D.M."/>
            <person name="Dimmock D."/>
            <person name="Haven J."/>
            <person name="Jiang H."/>
            <person name="MacLean K.N."/>
            <person name="Styren K."/>
            <person name="Schoof J."/>
            <person name="Goujon L."/>
            <person name="Lefrancois T."/>
            <person name="Friederich M."/>
            <person name="Coughlin C.R. II"/>
            <person name="Banerjee R."/>
            <person name="Haack T.B."/>
            <person name="Van Hove J.L.K."/>
        </authorList>
    </citation>
    <scope>FUNCTION</scope>
    <scope>CATALYTIC ACTIVITY</scope>
    <scope>INVOLVEMENT IN SQORD</scope>
    <scope>VARIANT SQORD LYS-213</scope>
    <scope>CHARACTERIZATION OF VARIANT SQORD LYS-213</scope>
</reference>
<reference evidence="12 13" key="11">
    <citation type="journal article" date="2019" name="Structure">
        <title>X-ray structure of human sulfide:quinone oxidoreductase: insights into the mechanism of mitochondrial hydrogen sulfide oxidation.</title>
        <authorList>
            <person name="Jackson M.R."/>
            <person name="Loll P.J."/>
            <person name="Jorns M.S."/>
        </authorList>
    </citation>
    <scope>X-RAY CRYSTALLOGRAPHY (2.59 ANGSTROMS) OF 42-450 IN COMPLEX WITH FAD</scope>
    <scope>COFACTOR</scope>
    <scope>ACTIVE SITE</scope>
    <scope>DISULFIDE BOND</scope>
</reference>
<name>SQOR_HUMAN</name>
<protein>
    <recommendedName>
        <fullName evidence="10">Sulfide:quinone oxidoreductase, mitochondrial</fullName>
        <shortName evidence="11">SQOR</shortName>
        <ecNumber evidence="4">1.8.5.8</ecNumber>
    </recommendedName>
    <alternativeName>
        <fullName>Sulfide dehydrogenase-like</fullName>
    </alternativeName>
    <alternativeName>
        <fullName evidence="11">Sulfide quinone oxidoreductase</fullName>
    </alternativeName>
</protein>